<keyword id="KW-1185">Reference proteome</keyword>
<keyword id="KW-0808">Transferase</keyword>
<keyword id="KW-0819">tRNA processing</keyword>
<evidence type="ECO:0000255" key="1">
    <source>
        <dbReference type="HAMAP-Rule" id="MF_01590"/>
    </source>
</evidence>
<accession>Q7N556</accession>
<name>CMOB_PHOLL</name>
<protein>
    <recommendedName>
        <fullName evidence="1">tRNA U34 carboxymethyltransferase</fullName>
        <ecNumber evidence="1">2.5.1.-</ecNumber>
    </recommendedName>
</protein>
<dbReference type="EC" id="2.5.1.-" evidence="1"/>
<dbReference type="EMBL" id="BX571866">
    <property type="protein sequence ID" value="CAE14395.1"/>
    <property type="molecule type" value="Genomic_DNA"/>
</dbReference>
<dbReference type="RefSeq" id="WP_011146356.1">
    <property type="nucleotide sequence ID" value="NC_005126.1"/>
</dbReference>
<dbReference type="SMR" id="Q7N556"/>
<dbReference type="STRING" id="243265.plu2102"/>
<dbReference type="GeneID" id="48848381"/>
<dbReference type="KEGG" id="plu:plu2102"/>
<dbReference type="eggNOG" id="COG0500">
    <property type="taxonomic scope" value="Bacteria"/>
</dbReference>
<dbReference type="HOGENOM" id="CLU_052665_0_0_6"/>
<dbReference type="OrthoDB" id="9773188at2"/>
<dbReference type="Proteomes" id="UP000002514">
    <property type="component" value="Chromosome"/>
</dbReference>
<dbReference type="GO" id="GO:0008168">
    <property type="term" value="F:methyltransferase activity"/>
    <property type="evidence" value="ECO:0007669"/>
    <property type="project" value="TreeGrafter"/>
</dbReference>
<dbReference type="GO" id="GO:0016765">
    <property type="term" value="F:transferase activity, transferring alkyl or aryl (other than methyl) groups"/>
    <property type="evidence" value="ECO:0007669"/>
    <property type="project" value="UniProtKB-UniRule"/>
</dbReference>
<dbReference type="GO" id="GO:0002098">
    <property type="term" value="P:tRNA wobble uridine modification"/>
    <property type="evidence" value="ECO:0007669"/>
    <property type="project" value="InterPro"/>
</dbReference>
<dbReference type="CDD" id="cd02440">
    <property type="entry name" value="AdoMet_MTases"/>
    <property type="match status" value="1"/>
</dbReference>
<dbReference type="Gene3D" id="3.40.50.150">
    <property type="entry name" value="Vaccinia Virus protein VP39"/>
    <property type="match status" value="1"/>
</dbReference>
<dbReference type="HAMAP" id="MF_01590">
    <property type="entry name" value="tRNA_carboxymethyltr_CmoB"/>
    <property type="match status" value="1"/>
</dbReference>
<dbReference type="InterPro" id="IPR010017">
    <property type="entry name" value="CmoB"/>
</dbReference>
<dbReference type="InterPro" id="IPR027555">
    <property type="entry name" value="Mo5U34_MeTrfas-like"/>
</dbReference>
<dbReference type="InterPro" id="IPR029063">
    <property type="entry name" value="SAM-dependent_MTases_sf"/>
</dbReference>
<dbReference type="NCBIfam" id="NF011650">
    <property type="entry name" value="PRK15068.1"/>
    <property type="match status" value="1"/>
</dbReference>
<dbReference type="NCBIfam" id="TIGR00452">
    <property type="entry name" value="tRNA 5-methoxyuridine(34)/uridine 5-oxyacetic acid(34) synthase CmoB"/>
    <property type="match status" value="1"/>
</dbReference>
<dbReference type="PANTHER" id="PTHR43464">
    <property type="entry name" value="METHYLTRANSFERASE"/>
    <property type="match status" value="1"/>
</dbReference>
<dbReference type="PANTHER" id="PTHR43464:SF95">
    <property type="entry name" value="TRNA U34 CARBOXYMETHYLTRANSFERASE"/>
    <property type="match status" value="1"/>
</dbReference>
<dbReference type="Pfam" id="PF08003">
    <property type="entry name" value="Methyltransf_9"/>
    <property type="match status" value="1"/>
</dbReference>
<dbReference type="SUPFAM" id="SSF53335">
    <property type="entry name" value="S-adenosyl-L-methionine-dependent methyltransferases"/>
    <property type="match status" value="1"/>
</dbReference>
<feature type="chain" id="PRO_0000313941" description="tRNA U34 carboxymethyltransferase">
    <location>
        <begin position="1"/>
        <end position="323"/>
    </location>
</feature>
<feature type="binding site" evidence="1">
    <location>
        <position position="91"/>
    </location>
    <ligand>
        <name>carboxy-S-adenosyl-L-methionine</name>
        <dbReference type="ChEBI" id="CHEBI:134278"/>
    </ligand>
</feature>
<feature type="binding site" evidence="1">
    <location>
        <position position="105"/>
    </location>
    <ligand>
        <name>carboxy-S-adenosyl-L-methionine</name>
        <dbReference type="ChEBI" id="CHEBI:134278"/>
    </ligand>
</feature>
<feature type="binding site" evidence="1">
    <location>
        <position position="110"/>
    </location>
    <ligand>
        <name>carboxy-S-adenosyl-L-methionine</name>
        <dbReference type="ChEBI" id="CHEBI:134278"/>
    </ligand>
</feature>
<feature type="binding site" evidence="1">
    <location>
        <position position="130"/>
    </location>
    <ligand>
        <name>carboxy-S-adenosyl-L-methionine</name>
        <dbReference type="ChEBI" id="CHEBI:134278"/>
    </ligand>
</feature>
<feature type="binding site" evidence="1">
    <location>
        <begin position="152"/>
        <end position="154"/>
    </location>
    <ligand>
        <name>carboxy-S-adenosyl-L-methionine</name>
        <dbReference type="ChEBI" id="CHEBI:134278"/>
    </ligand>
</feature>
<feature type="binding site" evidence="1">
    <location>
        <begin position="181"/>
        <end position="182"/>
    </location>
    <ligand>
        <name>carboxy-S-adenosyl-L-methionine</name>
        <dbReference type="ChEBI" id="CHEBI:134278"/>
    </ligand>
</feature>
<feature type="binding site" evidence="1">
    <location>
        <position position="196"/>
    </location>
    <ligand>
        <name>carboxy-S-adenosyl-L-methionine</name>
        <dbReference type="ChEBI" id="CHEBI:134278"/>
    </ligand>
</feature>
<feature type="binding site" evidence="1">
    <location>
        <position position="200"/>
    </location>
    <ligand>
        <name>carboxy-S-adenosyl-L-methionine</name>
        <dbReference type="ChEBI" id="CHEBI:134278"/>
    </ligand>
</feature>
<feature type="binding site" evidence="1">
    <location>
        <position position="315"/>
    </location>
    <ligand>
        <name>carboxy-S-adenosyl-L-methionine</name>
        <dbReference type="ChEBI" id="CHEBI:134278"/>
    </ligand>
</feature>
<gene>
    <name evidence="1" type="primary">cmoB</name>
    <name type="ordered locus">plu2102</name>
</gene>
<organism>
    <name type="scientific">Photorhabdus laumondii subsp. laumondii (strain DSM 15139 / CIP 105565 / TT01)</name>
    <name type="common">Photorhabdus luminescens subsp. laumondii</name>
    <dbReference type="NCBI Taxonomy" id="243265"/>
    <lineage>
        <taxon>Bacteria</taxon>
        <taxon>Pseudomonadati</taxon>
        <taxon>Pseudomonadota</taxon>
        <taxon>Gammaproteobacteria</taxon>
        <taxon>Enterobacterales</taxon>
        <taxon>Morganellaceae</taxon>
        <taxon>Photorhabdus</taxon>
    </lineage>
</organism>
<comment type="function">
    <text evidence="1">Catalyzes carboxymethyl transfer from carboxy-S-adenosyl-L-methionine (Cx-SAM) to 5-hydroxyuridine (ho5U) to form 5-carboxymethoxyuridine (cmo5U) at position 34 in tRNAs.</text>
</comment>
<comment type="catalytic activity">
    <reaction evidence="1">
        <text>carboxy-S-adenosyl-L-methionine + 5-hydroxyuridine(34) in tRNA = 5-carboxymethoxyuridine(34) in tRNA + S-adenosyl-L-homocysteine + H(+)</text>
        <dbReference type="Rhea" id="RHEA:52848"/>
        <dbReference type="Rhea" id="RHEA-COMP:13381"/>
        <dbReference type="Rhea" id="RHEA-COMP:13383"/>
        <dbReference type="ChEBI" id="CHEBI:15378"/>
        <dbReference type="ChEBI" id="CHEBI:57856"/>
        <dbReference type="ChEBI" id="CHEBI:134278"/>
        <dbReference type="ChEBI" id="CHEBI:136877"/>
        <dbReference type="ChEBI" id="CHEBI:136879"/>
    </reaction>
</comment>
<comment type="subunit">
    <text evidence="1">Homotetramer.</text>
</comment>
<comment type="similarity">
    <text evidence="1">Belongs to the class I-like SAM-binding methyltransferase superfamily. CmoB family.</text>
</comment>
<reference key="1">
    <citation type="journal article" date="2003" name="Nat. Biotechnol.">
        <title>The genome sequence of the entomopathogenic bacterium Photorhabdus luminescens.</title>
        <authorList>
            <person name="Duchaud E."/>
            <person name="Rusniok C."/>
            <person name="Frangeul L."/>
            <person name="Buchrieser C."/>
            <person name="Givaudan A."/>
            <person name="Taourit S."/>
            <person name="Bocs S."/>
            <person name="Boursaux-Eude C."/>
            <person name="Chandler M."/>
            <person name="Charles J.-F."/>
            <person name="Dassa E."/>
            <person name="Derose R."/>
            <person name="Derzelle S."/>
            <person name="Freyssinet G."/>
            <person name="Gaudriault S."/>
            <person name="Medigue C."/>
            <person name="Lanois A."/>
            <person name="Powell K."/>
            <person name="Siguier P."/>
            <person name="Vincent R."/>
            <person name="Wingate V."/>
            <person name="Zouine M."/>
            <person name="Glaser P."/>
            <person name="Boemare N."/>
            <person name="Danchin A."/>
            <person name="Kunst F."/>
        </authorList>
    </citation>
    <scope>NUCLEOTIDE SEQUENCE [LARGE SCALE GENOMIC DNA]</scope>
    <source>
        <strain>DSM 15139 / CIP 105565 / TT01</strain>
    </source>
</reference>
<sequence length="323" mass="36833">MIDFGNFYQLIAKNNLQHWLNCLPAQLQEWQKAALHGNFKSWVKTLENLPEISPTQLDLKNGVIAERDPPLSAGEKICLTNILRIFMPWRKGPFSLYGINIDTEWRSDWKWDRVLPHISPLTGRTILDVGCGSGYHLWRMVGEGAELAVGIDPTQLFLCQFEAVRKLLGNDQRAHLLPLGIEQLPALAAFDTVFSMGVLYHRRSPLDHLWQLKNQLISDGELILESLVVEGDEHTCLIPGERYAQMRNVYFIPSAKMVKIWLEKCGFVDVKIVDQAVTATEEQRRTDWMKTESLSDFLDPTDSNKTIEGYPAPLRAILIARKP</sequence>
<proteinExistence type="inferred from homology"/>